<dbReference type="EC" id="3.5.3.6" evidence="1"/>
<dbReference type="EMBL" id="CP000479">
    <property type="protein sequence ID" value="ABK66469.1"/>
    <property type="molecule type" value="Genomic_DNA"/>
</dbReference>
<dbReference type="RefSeq" id="WP_009975265.1">
    <property type="nucleotide sequence ID" value="NC_008595.1"/>
</dbReference>
<dbReference type="SMR" id="A0QBT9"/>
<dbReference type="KEGG" id="mav:MAV_1125"/>
<dbReference type="HOGENOM" id="CLU_052662_0_1_11"/>
<dbReference type="UniPathway" id="UPA00254">
    <property type="reaction ID" value="UER00364"/>
</dbReference>
<dbReference type="Proteomes" id="UP000001574">
    <property type="component" value="Chromosome"/>
</dbReference>
<dbReference type="GO" id="GO:0005737">
    <property type="term" value="C:cytoplasm"/>
    <property type="evidence" value="ECO:0007669"/>
    <property type="project" value="UniProtKB-SubCell"/>
</dbReference>
<dbReference type="GO" id="GO:0016990">
    <property type="term" value="F:arginine deiminase activity"/>
    <property type="evidence" value="ECO:0007669"/>
    <property type="project" value="UniProtKB-UniRule"/>
</dbReference>
<dbReference type="GO" id="GO:0019547">
    <property type="term" value="P:arginine catabolic process to ornithine"/>
    <property type="evidence" value="ECO:0007669"/>
    <property type="project" value="UniProtKB-UniRule"/>
</dbReference>
<dbReference type="GO" id="GO:0019546">
    <property type="term" value="P:arginine deiminase pathway"/>
    <property type="evidence" value="ECO:0007669"/>
    <property type="project" value="TreeGrafter"/>
</dbReference>
<dbReference type="Gene3D" id="1.10.3930.10">
    <property type="entry name" value="Arginine deiminase"/>
    <property type="match status" value="1"/>
</dbReference>
<dbReference type="Gene3D" id="3.75.10.10">
    <property type="entry name" value="L-arginine/glycine Amidinotransferase, Chain A"/>
    <property type="match status" value="1"/>
</dbReference>
<dbReference type="HAMAP" id="MF_00242">
    <property type="entry name" value="Arg_deiminase"/>
    <property type="match status" value="1"/>
</dbReference>
<dbReference type="InterPro" id="IPR003876">
    <property type="entry name" value="Arg_deiminase"/>
</dbReference>
<dbReference type="NCBIfam" id="TIGR01078">
    <property type="entry name" value="arcA"/>
    <property type="match status" value="1"/>
</dbReference>
<dbReference type="NCBIfam" id="NF002381">
    <property type="entry name" value="PRK01388.1"/>
    <property type="match status" value="1"/>
</dbReference>
<dbReference type="PANTHER" id="PTHR47271">
    <property type="entry name" value="ARGININE DEIMINASE"/>
    <property type="match status" value="1"/>
</dbReference>
<dbReference type="PANTHER" id="PTHR47271:SF2">
    <property type="entry name" value="ARGININE DEIMINASE"/>
    <property type="match status" value="1"/>
</dbReference>
<dbReference type="Pfam" id="PF02274">
    <property type="entry name" value="ADI"/>
    <property type="match status" value="1"/>
</dbReference>
<dbReference type="PIRSF" id="PIRSF006356">
    <property type="entry name" value="Arg_deiminase"/>
    <property type="match status" value="1"/>
</dbReference>
<dbReference type="PRINTS" id="PR01466">
    <property type="entry name" value="ARGDEIMINASE"/>
</dbReference>
<dbReference type="SUPFAM" id="SSF55909">
    <property type="entry name" value="Pentein"/>
    <property type="match status" value="1"/>
</dbReference>
<reference key="1">
    <citation type="submission" date="2006-10" db="EMBL/GenBank/DDBJ databases">
        <authorList>
            <person name="Fleischmann R.D."/>
            <person name="Dodson R.J."/>
            <person name="Haft D.H."/>
            <person name="Merkel J.S."/>
            <person name="Nelson W.C."/>
            <person name="Fraser C.M."/>
        </authorList>
    </citation>
    <scope>NUCLEOTIDE SEQUENCE [LARGE SCALE GENOMIC DNA]</scope>
    <source>
        <strain>104</strain>
    </source>
</reference>
<feature type="chain" id="PRO_0000336667" description="Arginine deiminase">
    <location>
        <begin position="1"/>
        <end position="402"/>
    </location>
</feature>
<feature type="active site" description="Amidino-cysteine intermediate" evidence="1">
    <location>
        <position position="392"/>
    </location>
</feature>
<protein>
    <recommendedName>
        <fullName evidence="1">Arginine deiminase</fullName>
        <shortName evidence="1">ADI</shortName>
        <ecNumber evidence="1">3.5.3.6</ecNumber>
    </recommendedName>
    <alternativeName>
        <fullName evidence="1">Arginine dihydrolase</fullName>
        <shortName evidence="1">AD</shortName>
    </alternativeName>
</protein>
<organism>
    <name type="scientific">Mycobacterium avium (strain 104)</name>
    <dbReference type="NCBI Taxonomy" id="243243"/>
    <lineage>
        <taxon>Bacteria</taxon>
        <taxon>Bacillati</taxon>
        <taxon>Actinomycetota</taxon>
        <taxon>Actinomycetes</taxon>
        <taxon>Mycobacteriales</taxon>
        <taxon>Mycobacteriaceae</taxon>
        <taxon>Mycobacterium</taxon>
        <taxon>Mycobacterium avium complex (MAC)</taxon>
    </lineage>
</organism>
<comment type="catalytic activity">
    <reaction evidence="1">
        <text>L-arginine + H2O = L-citrulline + NH4(+)</text>
        <dbReference type="Rhea" id="RHEA:19597"/>
        <dbReference type="ChEBI" id="CHEBI:15377"/>
        <dbReference type="ChEBI" id="CHEBI:28938"/>
        <dbReference type="ChEBI" id="CHEBI:32682"/>
        <dbReference type="ChEBI" id="CHEBI:57743"/>
        <dbReference type="EC" id="3.5.3.6"/>
    </reaction>
</comment>
<comment type="pathway">
    <text evidence="1">Amino-acid degradation; L-arginine degradation via ADI pathway; carbamoyl phosphate from L-arginine: step 1/2.</text>
</comment>
<comment type="subcellular location">
    <subcellularLocation>
        <location evidence="1">Cytoplasm</location>
    </subcellularLocation>
</comment>
<comment type="similarity">
    <text evidence="1">Belongs to the arginine deiminase family.</text>
</comment>
<accession>A0QBT9</accession>
<evidence type="ECO:0000255" key="1">
    <source>
        <dbReference type="HAMAP-Rule" id="MF_00242"/>
    </source>
</evidence>
<keyword id="KW-0056">Arginine metabolism</keyword>
<keyword id="KW-0963">Cytoplasm</keyword>
<keyword id="KW-0378">Hydrolase</keyword>
<proteinExistence type="inferred from homology"/>
<gene>
    <name evidence="1" type="primary">arcA</name>
    <name type="ordered locus">MAV_1125</name>
</gene>
<sequence>MGVVELGTNSEVGALRVVILHRPGGELLRLNPRNVDQLLFDGLPWVARAQEEHDQFAELLRSRGVEVLLLSDLLTEALTHSGAARMQGVAAAVDARRLGVPLAQELSAYLRGLEPARLAQVLMAGMTFNELPADTRTDVSLVLRMHHGGDFVIDPLPNLVFTRDSSIWIGPRVVIPTLALRARVREASLTDLIYAHHPRFTGVRRAYESRTAPVEGGDVLLLAPGVVAVGVGERTTPAGAEALARSLFDDDLAHTVLAVPIAQRRAQMHLDTVCTMVDTDTVVMYANVVDALSAFTIQRTPSGVEISEAPFLEAAATAMGIDKLRVIDTGLDPVIAEREQWDDGNNTLALSPGVVVAYERNAQTNMRLQEAGIEVLTIAGSELGTGRGGPRCMSCPVARDPL</sequence>
<name>ARCA_MYCA1</name>